<reference key="1">
    <citation type="journal article" date="2005" name="J. Bacteriol.">
        <title>Insights on evolution of virulence and resistance from the complete genome analysis of an early methicillin-resistant Staphylococcus aureus strain and a biofilm-producing methicillin-resistant Staphylococcus epidermidis strain.</title>
        <authorList>
            <person name="Gill S.R."/>
            <person name="Fouts D.E."/>
            <person name="Archer G.L."/>
            <person name="Mongodin E.F."/>
            <person name="DeBoy R.T."/>
            <person name="Ravel J."/>
            <person name="Paulsen I.T."/>
            <person name="Kolonay J.F."/>
            <person name="Brinkac L.M."/>
            <person name="Beanan M.J."/>
            <person name="Dodson R.J."/>
            <person name="Daugherty S.C."/>
            <person name="Madupu R."/>
            <person name="Angiuoli S.V."/>
            <person name="Durkin A.S."/>
            <person name="Haft D.H."/>
            <person name="Vamathevan J.J."/>
            <person name="Khouri H."/>
            <person name="Utterback T.R."/>
            <person name="Lee C."/>
            <person name="Dimitrov G."/>
            <person name="Jiang L."/>
            <person name="Qin H."/>
            <person name="Weidman J."/>
            <person name="Tran K."/>
            <person name="Kang K.H."/>
            <person name="Hance I.R."/>
            <person name="Nelson K.E."/>
            <person name="Fraser C.M."/>
        </authorList>
    </citation>
    <scope>NUCLEOTIDE SEQUENCE [LARGE SCALE GENOMIC DNA]</scope>
    <source>
        <strain>COL</strain>
    </source>
</reference>
<sequence>MSETFNQIKESFIEYLLFQYRFKSRIAVWVLNYIKVNEAKLANIHFVDTKINHHETLEIAEVGSHASAIQFTKRNIKLMNTNEIFDYIANHNCAFDIQIHFANVSKREQRLDDLIVAQLTESPSYQTYLHDLNSMAIDRHKHALLIDYLLHNIDLSLQMNEKQRFYQLTQILNTLKLVNKHNQFEDLADDN</sequence>
<proteinExistence type="inferred from homology"/>
<feature type="chain" id="PRO_0000216104" description="UPF0302 protein SACOL1502">
    <location>
        <begin position="1"/>
        <end position="191"/>
    </location>
</feature>
<accession>Q5HFW1</accession>
<name>Y1502_STAAC</name>
<evidence type="ECO:0000255" key="1">
    <source>
        <dbReference type="HAMAP-Rule" id="MF_00760"/>
    </source>
</evidence>
<comment type="similarity">
    <text evidence="1">Belongs to the UPF0302 family.</text>
</comment>
<dbReference type="EMBL" id="CP000046">
    <property type="protein sequence ID" value="AAW36697.1"/>
    <property type="molecule type" value="Genomic_DNA"/>
</dbReference>
<dbReference type="RefSeq" id="WP_000004947.1">
    <property type="nucleotide sequence ID" value="NZ_JBGOFO010000003.1"/>
</dbReference>
<dbReference type="SMR" id="Q5HFW1"/>
<dbReference type="KEGG" id="sac:SACOL1502"/>
<dbReference type="HOGENOM" id="CLU_122408_0_0_9"/>
<dbReference type="Proteomes" id="UP000000530">
    <property type="component" value="Chromosome"/>
</dbReference>
<dbReference type="Gene3D" id="3.40.1530.30">
    <property type="entry name" value="Uncharacterised family UPF0302, N-terminal domain"/>
    <property type="match status" value="1"/>
</dbReference>
<dbReference type="HAMAP" id="MF_00760">
    <property type="entry name" value="UPF0302"/>
    <property type="match status" value="1"/>
</dbReference>
<dbReference type="InterPro" id="IPR014957">
    <property type="entry name" value="IDEAL_dom"/>
</dbReference>
<dbReference type="InterPro" id="IPR011188">
    <property type="entry name" value="UPF0302"/>
</dbReference>
<dbReference type="InterPro" id="IPR014963">
    <property type="entry name" value="UPF0302_N"/>
</dbReference>
<dbReference type="InterPro" id="IPR038091">
    <property type="entry name" value="UPF0302_N_sf"/>
</dbReference>
<dbReference type="Pfam" id="PF08858">
    <property type="entry name" value="IDEAL"/>
    <property type="match status" value="1"/>
</dbReference>
<dbReference type="Pfam" id="PF08864">
    <property type="entry name" value="UPF0302"/>
    <property type="match status" value="1"/>
</dbReference>
<dbReference type="PIRSF" id="PIRSF007165">
    <property type="entry name" value="UCP007165"/>
    <property type="match status" value="1"/>
</dbReference>
<dbReference type="SMART" id="SM00914">
    <property type="entry name" value="IDEAL"/>
    <property type="match status" value="1"/>
</dbReference>
<gene>
    <name type="ordered locus">SACOL1502</name>
</gene>
<organism>
    <name type="scientific">Staphylococcus aureus (strain COL)</name>
    <dbReference type="NCBI Taxonomy" id="93062"/>
    <lineage>
        <taxon>Bacteria</taxon>
        <taxon>Bacillati</taxon>
        <taxon>Bacillota</taxon>
        <taxon>Bacilli</taxon>
        <taxon>Bacillales</taxon>
        <taxon>Staphylococcaceae</taxon>
        <taxon>Staphylococcus</taxon>
    </lineage>
</organism>
<protein>
    <recommendedName>
        <fullName evidence="1">UPF0302 protein SACOL1502</fullName>
    </recommendedName>
</protein>